<evidence type="ECO:0000269" key="1">
    <source>
    </source>
</evidence>
<evidence type="ECO:0000269" key="2">
    <source>
    </source>
</evidence>
<evidence type="ECO:0000269" key="3">
    <source>
    </source>
</evidence>
<evidence type="ECO:0000305" key="4"/>
<protein>
    <recommendedName>
        <fullName>Crustacean hyperglycemic hormones</fullName>
    </recommendedName>
    <component>
        <recommendedName>
            <fullName>CHH precursor-related peptide</fullName>
            <shortName>CPRP</shortName>
        </recommendedName>
    </component>
    <component>
        <recommendedName>
            <fullName>Crustacean hyperglycemic hormone</fullName>
            <shortName>CHH</shortName>
        </recommendedName>
    </component>
</protein>
<feature type="signal peptide" evidence="1">
    <location>
        <begin position="1"/>
        <end position="26"/>
    </location>
</feature>
<feature type="peptide" id="PRO_0000019037" description="CHH precursor-related peptide">
    <location>
        <begin position="27"/>
        <end position="64"/>
    </location>
</feature>
<feature type="peptide" id="PRO_0000019038" description="Crustacean hyperglycemic hormone">
    <location>
        <begin position="67"/>
        <end position="138"/>
    </location>
</feature>
<feature type="modified residue" description="Pyrrolidone carboxylic acid; partial" evidence="2">
    <location>
        <position position="67"/>
    </location>
</feature>
<feature type="modified residue" description="Valine amide" evidence="2">
    <location>
        <position position="138"/>
    </location>
</feature>
<feature type="disulfide bond" evidence="2">
    <location>
        <begin position="73"/>
        <end position="109"/>
    </location>
</feature>
<feature type="disulfide bond" evidence="2">
    <location>
        <begin position="89"/>
        <end position="105"/>
    </location>
</feature>
<feature type="disulfide bond" evidence="2">
    <location>
        <begin position="92"/>
        <end position="118"/>
    </location>
</feature>
<feature type="sequence conflict" description="In Ref. 3; AA sequence." evidence="4" ref="3">
    <original>EN</original>
    <variation>QH</variation>
    <location>
        <begin position="56"/>
        <end position="57"/>
    </location>
</feature>
<proteinExistence type="evidence at protein level"/>
<sequence length="142" mass="16138">MYSKTIPAMLAIITVAYLCALPHAHARSTQGYGRMDRILAALKTSPMEPSAALAVENGTTHPLEKRQIYDTSCKGVYDRALFNDLEHVCDDCYNLYRTSYVASACRSNCYSNLVFRQCMDDLLMMDEFDQYARKVQMVGRKK</sequence>
<comment type="function">
    <text>Hormone found in the sinus gland of isopods and decapods which controls the blood sugar level. Has a secretagogue action over the amylase released from the midgut gland. May act as a stress hormone and may be involved in the control of molting and reproduction.</text>
</comment>
<comment type="subcellular location">
    <subcellularLocation>
        <location>Secreted</location>
    </subcellularLocation>
</comment>
<comment type="tissue specificity">
    <text>Produced by the medulla terminalis X-organ in the eyestalks and transported to the sinus gland where they are stored and released.</text>
</comment>
<comment type="PTM">
    <text>The N-terminus is blocked only in isoform CHH-II but not in isoform CHH-I.</text>
</comment>
<comment type="mass spectrometry" mass="8538.3" error="1.0" method="Electrospray" evidence="3">
    <molecule>Crustacean hyperglycemic hormone</molecule>
</comment>
<comment type="similarity">
    <text evidence="4">Belongs to the arthropod CHH/MIH/GIH/VIH hormone family.</text>
</comment>
<accession>P14944</accession>
<dbReference type="EMBL" id="X17596">
    <property type="protein sequence ID" value="CAA35605.1"/>
    <property type="molecule type" value="mRNA"/>
</dbReference>
<dbReference type="PIR" id="S06630">
    <property type="entry name" value="S06630"/>
</dbReference>
<dbReference type="SMR" id="P14944"/>
<dbReference type="GO" id="GO:0005576">
    <property type="term" value="C:extracellular region"/>
    <property type="evidence" value="ECO:0007669"/>
    <property type="project" value="UniProtKB-SubCell"/>
</dbReference>
<dbReference type="GO" id="GO:0005184">
    <property type="term" value="F:neuropeptide hormone activity"/>
    <property type="evidence" value="ECO:0007669"/>
    <property type="project" value="InterPro"/>
</dbReference>
<dbReference type="GO" id="GO:0007623">
    <property type="term" value="P:circadian rhythm"/>
    <property type="evidence" value="ECO:0007669"/>
    <property type="project" value="TreeGrafter"/>
</dbReference>
<dbReference type="GO" id="GO:0006006">
    <property type="term" value="P:glucose metabolic process"/>
    <property type="evidence" value="ECO:0007669"/>
    <property type="project" value="UniProtKB-KW"/>
</dbReference>
<dbReference type="GO" id="GO:0007218">
    <property type="term" value="P:neuropeptide signaling pathway"/>
    <property type="evidence" value="ECO:0007669"/>
    <property type="project" value="UniProtKB-KW"/>
</dbReference>
<dbReference type="Gene3D" id="1.10.2010.10">
    <property type="entry name" value="Crustacean CHH/MIH/GIH neurohormone"/>
    <property type="match status" value="1"/>
</dbReference>
<dbReference type="InterPro" id="IPR018251">
    <property type="entry name" value="Crust_neurhormone_CS"/>
</dbReference>
<dbReference type="InterPro" id="IPR005558">
    <property type="entry name" value="Crust_neurhormone_H"/>
</dbReference>
<dbReference type="InterPro" id="IPR031098">
    <property type="entry name" value="Crust_neurohorm"/>
</dbReference>
<dbReference type="InterPro" id="IPR035957">
    <property type="entry name" value="Crust_neurohorm_sf"/>
</dbReference>
<dbReference type="InterPro" id="IPR001166">
    <property type="entry name" value="Hyperglycemic"/>
</dbReference>
<dbReference type="InterPro" id="IPR000346">
    <property type="entry name" value="Hyperglycemic1"/>
</dbReference>
<dbReference type="PANTHER" id="PTHR35981">
    <property type="entry name" value="ION TRANSPORT PEPTIDE, ISOFORM C"/>
    <property type="match status" value="1"/>
</dbReference>
<dbReference type="PANTHER" id="PTHR35981:SF2">
    <property type="entry name" value="ION TRANSPORT PEPTIDE, ISOFORM C"/>
    <property type="match status" value="1"/>
</dbReference>
<dbReference type="Pfam" id="PF03858">
    <property type="entry name" value="Crust_neuro_H"/>
    <property type="match status" value="1"/>
</dbReference>
<dbReference type="Pfam" id="PF01147">
    <property type="entry name" value="Crust_neurohorm"/>
    <property type="match status" value="1"/>
</dbReference>
<dbReference type="PRINTS" id="PR00548">
    <property type="entry name" value="HYPRGLYCEMC1"/>
</dbReference>
<dbReference type="PRINTS" id="PR00550">
    <property type="entry name" value="HYPRGLYCEMIC"/>
</dbReference>
<dbReference type="SUPFAM" id="SSF81778">
    <property type="entry name" value="Crustacean CHH/MIH/GIH neurohormone"/>
    <property type="match status" value="1"/>
</dbReference>
<dbReference type="PROSITE" id="PS01250">
    <property type="entry name" value="CHH_MIH_GIH"/>
    <property type="match status" value="1"/>
</dbReference>
<organism>
    <name type="scientific">Carcinus maenas</name>
    <name type="common">Common shore crab</name>
    <name type="synonym">Green crab</name>
    <dbReference type="NCBI Taxonomy" id="6759"/>
    <lineage>
        <taxon>Eukaryota</taxon>
        <taxon>Metazoa</taxon>
        <taxon>Ecdysozoa</taxon>
        <taxon>Arthropoda</taxon>
        <taxon>Crustacea</taxon>
        <taxon>Multicrustacea</taxon>
        <taxon>Malacostraca</taxon>
        <taxon>Eumalacostraca</taxon>
        <taxon>Eucarida</taxon>
        <taxon>Decapoda</taxon>
        <taxon>Pleocyemata</taxon>
        <taxon>Brachyura</taxon>
        <taxon>Eubrachyura</taxon>
        <taxon>Portunoidea</taxon>
        <taxon>Carcinidae</taxon>
        <taxon>Carcinus</taxon>
    </lineage>
</organism>
<keyword id="KW-0027">Amidation</keyword>
<keyword id="KW-0119">Carbohydrate metabolism</keyword>
<keyword id="KW-0165">Cleavage on pair of basic residues</keyword>
<keyword id="KW-0903">Direct protein sequencing</keyword>
<keyword id="KW-1015">Disulfide bond</keyword>
<keyword id="KW-0313">Glucose metabolism</keyword>
<keyword id="KW-0372">Hormone</keyword>
<keyword id="KW-0527">Neuropeptide</keyword>
<keyword id="KW-0873">Pyrrolidone carboxylic acid</keyword>
<keyword id="KW-0964">Secreted</keyword>
<keyword id="KW-0732">Signal</keyword>
<name>CHH_CARMA</name>
<reference key="1">
    <citation type="journal article" date="1989" name="FEBS Lett.">
        <title>Cloning and sequence analysis of cDNA for precursor of a crustacean hyperglycemic hormone.</title>
        <authorList>
            <person name="Weidemann W."/>
            <person name="Gromoll J."/>
            <person name="Keller R."/>
        </authorList>
    </citation>
    <scope>NUCLEOTIDE SEQUENCE [MRNA]</scope>
    <source>
        <tissue>Eyestalk</tissue>
    </source>
</reference>
<reference key="2">
    <citation type="journal article" date="1989" name="FEBS Lett.">
        <title>Amino acid sequence of the crustacean hyperglycemic hormone (CHH) from the shore crab, Carcinus maenas.</title>
        <authorList>
            <person name="Kegel G."/>
            <person name="Reichwein B."/>
            <person name="Weese S."/>
            <person name="Gaus G."/>
            <person name="Peter-Katalinic J."/>
            <person name="Keller R."/>
        </authorList>
    </citation>
    <scope>PROTEIN SEQUENCE OF 67-138</scope>
    <scope>PYROGLUTAMATE FORMATION AT GLN-67</scope>
    <scope>AMIDATION AT VAL-138</scope>
    <scope>DISULFIDE BONDS</scope>
</reference>
<reference key="3">
    <citation type="journal article" date="1991" name="Peptides">
        <title>Isolation and amino acid sequence of crustacean hyperglycemic hormone precursor-related peptides.</title>
        <authorList>
            <person name="Tensen C.P."/>
            <person name="Verhoeven A.H.M."/>
            <person name="Gaus G."/>
            <person name="Janssen K.P.C."/>
            <person name="Keller R."/>
            <person name="van Herp F."/>
        </authorList>
    </citation>
    <scope>PROTEIN SEQUENCE OF 27-64</scope>
    <source>
        <tissue>Sinus gland</tissue>
    </source>
</reference>
<reference key="4">
    <citation type="journal article" date="1996" name="Eur. J. Biochem.">
        <title>Does the N-terminal pyroglutamate residue have any physiological significance for crab hyperglycemic neuropeptides?</title>
        <authorList>
            <person name="Chung J.S."/>
            <person name="Webster S.G."/>
        </authorList>
    </citation>
    <scope>PROTEIN SEQUENCE OF 67-138</scope>
    <scope>MASS SPECTROMETRY</scope>
</reference>